<accession>A4WVK5</accession>
<name>RL2_CERS5</name>
<feature type="chain" id="PRO_1000051944" description="Large ribosomal subunit protein uL2">
    <location>
        <begin position="1"/>
        <end position="279"/>
    </location>
</feature>
<feature type="region of interest" description="Disordered" evidence="2">
    <location>
        <begin position="224"/>
        <end position="279"/>
    </location>
</feature>
<feature type="compositionally biased region" description="Basic residues" evidence="2">
    <location>
        <begin position="269"/>
        <end position="279"/>
    </location>
</feature>
<sequence length="279" mass="30355">MALKSYKPTTPGQRGLVLIDRSELWKGRPVKTLVEGLIKTGGRNNTGRVTMWHKGGGAKRLYRIVDFKRRKFDVPAVVERIEYDPNRTAFIALVRYEDGELAYILAPQRLAVGDSVIAGAKTDVKPGNAMPFSGMPIGTIVHNVELKPGKGGQLARAAGTYAQFVGRDGGYAQIRLSSGELRMVRQECMATVGAVSNPDNSNQNFGKAGRMRHKGVRPTVRGVAMNPIDHPHGGGEGRTSGGRHPVTPWGKGTKGNRTRKSKASDKLIVRSRHAKKKGR</sequence>
<gene>
    <name evidence="1" type="primary">rplB</name>
    <name type="ordered locus">Rsph17025_2531</name>
</gene>
<keyword id="KW-0687">Ribonucleoprotein</keyword>
<keyword id="KW-0689">Ribosomal protein</keyword>
<keyword id="KW-0694">RNA-binding</keyword>
<keyword id="KW-0699">rRNA-binding</keyword>
<comment type="function">
    <text evidence="1">One of the primary rRNA binding proteins. Required for association of the 30S and 50S subunits to form the 70S ribosome, for tRNA binding and peptide bond formation. It has been suggested to have peptidyltransferase activity; this is somewhat controversial. Makes several contacts with the 16S rRNA in the 70S ribosome.</text>
</comment>
<comment type="subunit">
    <text evidence="1">Part of the 50S ribosomal subunit. Forms a bridge to the 30S subunit in the 70S ribosome.</text>
</comment>
<comment type="similarity">
    <text evidence="1">Belongs to the universal ribosomal protein uL2 family.</text>
</comment>
<reference key="1">
    <citation type="submission" date="2007-04" db="EMBL/GenBank/DDBJ databases">
        <title>Complete sequence of chromosome of Rhodobacter sphaeroides ATCC 17025.</title>
        <authorList>
            <consortium name="US DOE Joint Genome Institute"/>
            <person name="Copeland A."/>
            <person name="Lucas S."/>
            <person name="Lapidus A."/>
            <person name="Barry K."/>
            <person name="Detter J.C."/>
            <person name="Glavina del Rio T."/>
            <person name="Hammon N."/>
            <person name="Israni S."/>
            <person name="Dalin E."/>
            <person name="Tice H."/>
            <person name="Pitluck S."/>
            <person name="Chertkov O."/>
            <person name="Brettin T."/>
            <person name="Bruce D."/>
            <person name="Han C."/>
            <person name="Schmutz J."/>
            <person name="Larimer F."/>
            <person name="Land M."/>
            <person name="Hauser L."/>
            <person name="Kyrpides N."/>
            <person name="Kim E."/>
            <person name="Richardson P."/>
            <person name="Mackenzie C."/>
            <person name="Choudhary M."/>
            <person name="Donohue T.J."/>
            <person name="Kaplan S."/>
        </authorList>
    </citation>
    <scope>NUCLEOTIDE SEQUENCE [LARGE SCALE GENOMIC DNA]</scope>
    <source>
        <strain>ATCC 17025 / ATH 2.4.3</strain>
    </source>
</reference>
<organism>
    <name type="scientific">Cereibacter sphaeroides (strain ATCC 17025 / ATH 2.4.3)</name>
    <name type="common">Rhodobacter sphaeroides</name>
    <dbReference type="NCBI Taxonomy" id="349102"/>
    <lineage>
        <taxon>Bacteria</taxon>
        <taxon>Pseudomonadati</taxon>
        <taxon>Pseudomonadota</taxon>
        <taxon>Alphaproteobacteria</taxon>
        <taxon>Rhodobacterales</taxon>
        <taxon>Paracoccaceae</taxon>
        <taxon>Cereibacter</taxon>
    </lineage>
</organism>
<dbReference type="EMBL" id="CP000661">
    <property type="protein sequence ID" value="ABP71419.1"/>
    <property type="molecule type" value="Genomic_DNA"/>
</dbReference>
<dbReference type="SMR" id="A4WVK5"/>
<dbReference type="STRING" id="349102.Rsph17025_2531"/>
<dbReference type="KEGG" id="rsq:Rsph17025_2531"/>
<dbReference type="eggNOG" id="COG0090">
    <property type="taxonomic scope" value="Bacteria"/>
</dbReference>
<dbReference type="HOGENOM" id="CLU_036235_2_1_5"/>
<dbReference type="BioCyc" id="RSPH349102:G1G8M-2609-MONOMER"/>
<dbReference type="GO" id="GO:0015934">
    <property type="term" value="C:large ribosomal subunit"/>
    <property type="evidence" value="ECO:0007669"/>
    <property type="project" value="InterPro"/>
</dbReference>
<dbReference type="GO" id="GO:0019843">
    <property type="term" value="F:rRNA binding"/>
    <property type="evidence" value="ECO:0007669"/>
    <property type="project" value="UniProtKB-UniRule"/>
</dbReference>
<dbReference type="GO" id="GO:0003735">
    <property type="term" value="F:structural constituent of ribosome"/>
    <property type="evidence" value="ECO:0007669"/>
    <property type="project" value="InterPro"/>
</dbReference>
<dbReference type="GO" id="GO:0016740">
    <property type="term" value="F:transferase activity"/>
    <property type="evidence" value="ECO:0007669"/>
    <property type="project" value="InterPro"/>
</dbReference>
<dbReference type="GO" id="GO:0002181">
    <property type="term" value="P:cytoplasmic translation"/>
    <property type="evidence" value="ECO:0007669"/>
    <property type="project" value="TreeGrafter"/>
</dbReference>
<dbReference type="FunFam" id="2.30.30.30:FF:000001">
    <property type="entry name" value="50S ribosomal protein L2"/>
    <property type="match status" value="1"/>
</dbReference>
<dbReference type="FunFam" id="2.40.50.140:FF:000003">
    <property type="entry name" value="50S ribosomal protein L2"/>
    <property type="match status" value="1"/>
</dbReference>
<dbReference type="FunFam" id="4.10.950.10:FF:000001">
    <property type="entry name" value="50S ribosomal protein L2"/>
    <property type="match status" value="1"/>
</dbReference>
<dbReference type="Gene3D" id="2.30.30.30">
    <property type="match status" value="1"/>
</dbReference>
<dbReference type="Gene3D" id="2.40.50.140">
    <property type="entry name" value="Nucleic acid-binding proteins"/>
    <property type="match status" value="1"/>
</dbReference>
<dbReference type="Gene3D" id="4.10.950.10">
    <property type="entry name" value="Ribosomal protein L2, domain 3"/>
    <property type="match status" value="1"/>
</dbReference>
<dbReference type="HAMAP" id="MF_01320_B">
    <property type="entry name" value="Ribosomal_uL2_B"/>
    <property type="match status" value="1"/>
</dbReference>
<dbReference type="InterPro" id="IPR012340">
    <property type="entry name" value="NA-bd_OB-fold"/>
</dbReference>
<dbReference type="InterPro" id="IPR014722">
    <property type="entry name" value="Rib_uL2_dom2"/>
</dbReference>
<dbReference type="InterPro" id="IPR002171">
    <property type="entry name" value="Ribosomal_uL2"/>
</dbReference>
<dbReference type="InterPro" id="IPR005880">
    <property type="entry name" value="Ribosomal_uL2_bac/org-type"/>
</dbReference>
<dbReference type="InterPro" id="IPR022669">
    <property type="entry name" value="Ribosomal_uL2_C"/>
</dbReference>
<dbReference type="InterPro" id="IPR022671">
    <property type="entry name" value="Ribosomal_uL2_CS"/>
</dbReference>
<dbReference type="InterPro" id="IPR014726">
    <property type="entry name" value="Ribosomal_uL2_dom3"/>
</dbReference>
<dbReference type="InterPro" id="IPR022666">
    <property type="entry name" value="Ribosomal_uL2_RNA-bd_dom"/>
</dbReference>
<dbReference type="InterPro" id="IPR008991">
    <property type="entry name" value="Translation_prot_SH3-like_sf"/>
</dbReference>
<dbReference type="NCBIfam" id="TIGR01171">
    <property type="entry name" value="rplB_bact"/>
    <property type="match status" value="1"/>
</dbReference>
<dbReference type="PANTHER" id="PTHR13691:SF5">
    <property type="entry name" value="LARGE RIBOSOMAL SUBUNIT PROTEIN UL2M"/>
    <property type="match status" value="1"/>
</dbReference>
<dbReference type="PANTHER" id="PTHR13691">
    <property type="entry name" value="RIBOSOMAL PROTEIN L2"/>
    <property type="match status" value="1"/>
</dbReference>
<dbReference type="Pfam" id="PF00181">
    <property type="entry name" value="Ribosomal_L2"/>
    <property type="match status" value="1"/>
</dbReference>
<dbReference type="Pfam" id="PF03947">
    <property type="entry name" value="Ribosomal_L2_C"/>
    <property type="match status" value="1"/>
</dbReference>
<dbReference type="PIRSF" id="PIRSF002158">
    <property type="entry name" value="Ribosomal_L2"/>
    <property type="match status" value="1"/>
</dbReference>
<dbReference type="SMART" id="SM01383">
    <property type="entry name" value="Ribosomal_L2"/>
    <property type="match status" value="1"/>
</dbReference>
<dbReference type="SMART" id="SM01382">
    <property type="entry name" value="Ribosomal_L2_C"/>
    <property type="match status" value="1"/>
</dbReference>
<dbReference type="SUPFAM" id="SSF50249">
    <property type="entry name" value="Nucleic acid-binding proteins"/>
    <property type="match status" value="1"/>
</dbReference>
<dbReference type="SUPFAM" id="SSF50104">
    <property type="entry name" value="Translation proteins SH3-like domain"/>
    <property type="match status" value="1"/>
</dbReference>
<dbReference type="PROSITE" id="PS00467">
    <property type="entry name" value="RIBOSOMAL_L2"/>
    <property type="match status" value="1"/>
</dbReference>
<protein>
    <recommendedName>
        <fullName evidence="1">Large ribosomal subunit protein uL2</fullName>
    </recommendedName>
    <alternativeName>
        <fullName evidence="3">50S ribosomal protein L2</fullName>
    </alternativeName>
</protein>
<proteinExistence type="inferred from homology"/>
<evidence type="ECO:0000255" key="1">
    <source>
        <dbReference type="HAMAP-Rule" id="MF_01320"/>
    </source>
</evidence>
<evidence type="ECO:0000256" key="2">
    <source>
        <dbReference type="SAM" id="MobiDB-lite"/>
    </source>
</evidence>
<evidence type="ECO:0000305" key="3"/>